<reference key="1">
    <citation type="submission" date="2009-04" db="EMBL/GenBank/DDBJ databases">
        <title>Genome sequence of Bacillus anthracis A0248.</title>
        <authorList>
            <person name="Dodson R.J."/>
            <person name="Munk A.C."/>
            <person name="Bruce D."/>
            <person name="Detter C."/>
            <person name="Tapia R."/>
            <person name="Sutton G."/>
            <person name="Sims D."/>
            <person name="Brettin T."/>
        </authorList>
    </citation>
    <scope>NUCLEOTIDE SEQUENCE [LARGE SCALE GENOMIC DNA]</scope>
    <source>
        <strain>A0248</strain>
    </source>
</reference>
<accession>C3P5Q0</accession>
<keyword id="KW-0963">Cytoplasm</keyword>
<keyword id="KW-0255">Endonuclease</keyword>
<keyword id="KW-0378">Hydrolase</keyword>
<keyword id="KW-0460">Magnesium</keyword>
<keyword id="KW-0479">Metal-binding</keyword>
<keyword id="KW-0507">mRNA processing</keyword>
<keyword id="KW-0540">Nuclease</keyword>
<keyword id="KW-0694">RNA-binding</keyword>
<keyword id="KW-0698">rRNA processing</keyword>
<keyword id="KW-0699">rRNA-binding</keyword>
<keyword id="KW-0819">tRNA processing</keyword>
<comment type="function">
    <text evidence="1">Digests double-stranded RNA. Involved in the processing of primary rRNA transcript to yield the immediate precursors to the large and small rRNAs (23S and 16S). Processes some mRNAs, and tRNAs when they are encoded in the rRNA operon. Processes pre-crRNA and tracrRNA of type II CRISPR loci if present in the organism.</text>
</comment>
<comment type="catalytic activity">
    <reaction evidence="1">
        <text>Endonucleolytic cleavage to 5'-phosphomonoester.</text>
        <dbReference type="EC" id="3.1.26.3"/>
    </reaction>
</comment>
<comment type="cofactor">
    <cofactor evidence="1">
        <name>Mg(2+)</name>
        <dbReference type="ChEBI" id="CHEBI:18420"/>
    </cofactor>
</comment>
<comment type="subunit">
    <text evidence="1">Homodimer.</text>
</comment>
<comment type="subcellular location">
    <subcellularLocation>
        <location evidence="1">Cytoplasm</location>
    </subcellularLocation>
</comment>
<comment type="similarity">
    <text evidence="1">Belongs to the ribonuclease III family.</text>
</comment>
<name>RNC_BACAA</name>
<evidence type="ECO:0000255" key="1">
    <source>
        <dbReference type="HAMAP-Rule" id="MF_00104"/>
    </source>
</evidence>
<dbReference type="EC" id="3.1.26.3" evidence="1"/>
<dbReference type="EMBL" id="CP001598">
    <property type="protein sequence ID" value="ACQ46016.1"/>
    <property type="molecule type" value="Genomic_DNA"/>
</dbReference>
<dbReference type="RefSeq" id="WP_001146873.1">
    <property type="nucleotide sequence ID" value="NC_012659.1"/>
</dbReference>
<dbReference type="SMR" id="C3P5Q0"/>
<dbReference type="GeneID" id="45023677"/>
<dbReference type="KEGG" id="bai:BAA_4011"/>
<dbReference type="HOGENOM" id="CLU_000907_1_3_9"/>
<dbReference type="GO" id="GO:0005737">
    <property type="term" value="C:cytoplasm"/>
    <property type="evidence" value="ECO:0007669"/>
    <property type="project" value="UniProtKB-SubCell"/>
</dbReference>
<dbReference type="GO" id="GO:0003725">
    <property type="term" value="F:double-stranded RNA binding"/>
    <property type="evidence" value="ECO:0007669"/>
    <property type="project" value="TreeGrafter"/>
</dbReference>
<dbReference type="GO" id="GO:0046872">
    <property type="term" value="F:metal ion binding"/>
    <property type="evidence" value="ECO:0007669"/>
    <property type="project" value="UniProtKB-KW"/>
</dbReference>
<dbReference type="GO" id="GO:0004525">
    <property type="term" value="F:ribonuclease III activity"/>
    <property type="evidence" value="ECO:0007669"/>
    <property type="project" value="UniProtKB-UniRule"/>
</dbReference>
<dbReference type="GO" id="GO:0019843">
    <property type="term" value="F:rRNA binding"/>
    <property type="evidence" value="ECO:0007669"/>
    <property type="project" value="UniProtKB-KW"/>
</dbReference>
<dbReference type="GO" id="GO:0006397">
    <property type="term" value="P:mRNA processing"/>
    <property type="evidence" value="ECO:0007669"/>
    <property type="project" value="UniProtKB-UniRule"/>
</dbReference>
<dbReference type="GO" id="GO:0010468">
    <property type="term" value="P:regulation of gene expression"/>
    <property type="evidence" value="ECO:0007669"/>
    <property type="project" value="TreeGrafter"/>
</dbReference>
<dbReference type="GO" id="GO:0006364">
    <property type="term" value="P:rRNA processing"/>
    <property type="evidence" value="ECO:0007669"/>
    <property type="project" value="UniProtKB-UniRule"/>
</dbReference>
<dbReference type="GO" id="GO:0008033">
    <property type="term" value="P:tRNA processing"/>
    <property type="evidence" value="ECO:0007669"/>
    <property type="project" value="UniProtKB-KW"/>
</dbReference>
<dbReference type="CDD" id="cd10845">
    <property type="entry name" value="DSRM_RNAse_III_family"/>
    <property type="match status" value="1"/>
</dbReference>
<dbReference type="CDD" id="cd00593">
    <property type="entry name" value="RIBOc"/>
    <property type="match status" value="1"/>
</dbReference>
<dbReference type="FunFam" id="1.10.1520.10:FF:000001">
    <property type="entry name" value="Ribonuclease 3"/>
    <property type="match status" value="1"/>
</dbReference>
<dbReference type="FunFam" id="3.30.160.20:FF:000003">
    <property type="entry name" value="Ribonuclease 3"/>
    <property type="match status" value="1"/>
</dbReference>
<dbReference type="Gene3D" id="3.30.160.20">
    <property type="match status" value="1"/>
</dbReference>
<dbReference type="Gene3D" id="1.10.1520.10">
    <property type="entry name" value="Ribonuclease III domain"/>
    <property type="match status" value="1"/>
</dbReference>
<dbReference type="HAMAP" id="MF_00104">
    <property type="entry name" value="RNase_III"/>
    <property type="match status" value="1"/>
</dbReference>
<dbReference type="InterPro" id="IPR014720">
    <property type="entry name" value="dsRBD_dom"/>
</dbReference>
<dbReference type="InterPro" id="IPR011907">
    <property type="entry name" value="RNase_III"/>
</dbReference>
<dbReference type="InterPro" id="IPR000999">
    <property type="entry name" value="RNase_III_dom"/>
</dbReference>
<dbReference type="InterPro" id="IPR036389">
    <property type="entry name" value="RNase_III_sf"/>
</dbReference>
<dbReference type="NCBIfam" id="TIGR02191">
    <property type="entry name" value="RNaseIII"/>
    <property type="match status" value="1"/>
</dbReference>
<dbReference type="PANTHER" id="PTHR11207:SF0">
    <property type="entry name" value="RIBONUCLEASE 3"/>
    <property type="match status" value="1"/>
</dbReference>
<dbReference type="PANTHER" id="PTHR11207">
    <property type="entry name" value="RIBONUCLEASE III"/>
    <property type="match status" value="1"/>
</dbReference>
<dbReference type="Pfam" id="PF00035">
    <property type="entry name" value="dsrm"/>
    <property type="match status" value="1"/>
</dbReference>
<dbReference type="Pfam" id="PF14622">
    <property type="entry name" value="Ribonucleas_3_3"/>
    <property type="match status" value="1"/>
</dbReference>
<dbReference type="SMART" id="SM00358">
    <property type="entry name" value="DSRM"/>
    <property type="match status" value="1"/>
</dbReference>
<dbReference type="SMART" id="SM00535">
    <property type="entry name" value="RIBOc"/>
    <property type="match status" value="1"/>
</dbReference>
<dbReference type="SUPFAM" id="SSF54768">
    <property type="entry name" value="dsRNA-binding domain-like"/>
    <property type="match status" value="1"/>
</dbReference>
<dbReference type="SUPFAM" id="SSF69065">
    <property type="entry name" value="RNase III domain-like"/>
    <property type="match status" value="1"/>
</dbReference>
<dbReference type="PROSITE" id="PS50137">
    <property type="entry name" value="DS_RBD"/>
    <property type="match status" value="1"/>
</dbReference>
<dbReference type="PROSITE" id="PS00517">
    <property type="entry name" value="RNASE_3_1"/>
    <property type="match status" value="1"/>
</dbReference>
<dbReference type="PROSITE" id="PS50142">
    <property type="entry name" value="RNASE_3_2"/>
    <property type="match status" value="1"/>
</dbReference>
<protein>
    <recommendedName>
        <fullName evidence="1">Ribonuclease 3</fullName>
        <ecNumber evidence="1">3.1.26.3</ecNumber>
    </recommendedName>
    <alternativeName>
        <fullName evidence="1">Ribonuclease III</fullName>
        <shortName evidence="1">RNase III</shortName>
    </alternativeName>
</protein>
<sequence>MPYRKYREKKYETKYREAFKLFQEKIGITFTDEKLLIQAFTHSSYVNEHRKKPHEDNERLEFLGDAVLELTVSQYLFQKYPTMSEGELTKLRAAIVCEPSLVRFANELSFGSLVLLGKGEEMTGGRERPALLADVFEAFIGALYLDQGLETVWGFLKEIVYPKINEGAFSHVMDYKSQLQELIQRDGSGNIEYQILQEKGPAHNREFVSRVTLNNVALGLGSGKSKKEAEQQAAAEALKKLKEQL</sequence>
<feature type="chain" id="PRO_1000118910" description="Ribonuclease 3">
    <location>
        <begin position="1"/>
        <end position="245"/>
    </location>
</feature>
<feature type="domain" description="RNase III" evidence="1">
    <location>
        <begin position="19"/>
        <end position="148"/>
    </location>
</feature>
<feature type="domain" description="DRBM" evidence="1">
    <location>
        <begin position="174"/>
        <end position="243"/>
    </location>
</feature>
<feature type="active site" evidence="1">
    <location>
        <position position="65"/>
    </location>
</feature>
<feature type="active site" evidence="1">
    <location>
        <position position="137"/>
    </location>
</feature>
<feature type="binding site" evidence="1">
    <location>
        <position position="61"/>
    </location>
    <ligand>
        <name>Mg(2+)</name>
        <dbReference type="ChEBI" id="CHEBI:18420"/>
    </ligand>
</feature>
<feature type="binding site" evidence="1">
    <location>
        <position position="134"/>
    </location>
    <ligand>
        <name>Mg(2+)</name>
        <dbReference type="ChEBI" id="CHEBI:18420"/>
    </ligand>
</feature>
<feature type="binding site" evidence="1">
    <location>
        <position position="137"/>
    </location>
    <ligand>
        <name>Mg(2+)</name>
        <dbReference type="ChEBI" id="CHEBI:18420"/>
    </ligand>
</feature>
<proteinExistence type="inferred from homology"/>
<organism>
    <name type="scientific">Bacillus anthracis (strain A0248)</name>
    <dbReference type="NCBI Taxonomy" id="592021"/>
    <lineage>
        <taxon>Bacteria</taxon>
        <taxon>Bacillati</taxon>
        <taxon>Bacillota</taxon>
        <taxon>Bacilli</taxon>
        <taxon>Bacillales</taxon>
        <taxon>Bacillaceae</taxon>
        <taxon>Bacillus</taxon>
        <taxon>Bacillus cereus group</taxon>
    </lineage>
</organism>
<gene>
    <name evidence="1" type="primary">rnc</name>
    <name type="ordered locus">BAA_4011</name>
</gene>